<name>CAV_DROSE</name>
<proteinExistence type="inferred from homology"/>
<protein>
    <recommendedName>
        <fullName evidence="1">Telomere-binding protein cav</fullName>
    </recommendedName>
    <alternativeName>
        <fullName>Protein caravaggio</fullName>
    </alternativeName>
</protein>
<gene>
    <name evidence="1" type="primary">cav</name>
    <name type="ORF">GM26573</name>
</gene>
<feature type="chain" id="PRO_0000379490" description="Telomere-binding protein cav">
    <location>
        <begin position="1"/>
        <end position="336"/>
    </location>
</feature>
<feature type="region of interest" description="Required for binding to Su(var)205" evidence="1">
    <location>
        <begin position="107"/>
        <end position="328"/>
    </location>
</feature>
<feature type="region of interest" description="Disordered" evidence="3">
    <location>
        <begin position="137"/>
        <end position="158"/>
    </location>
</feature>
<feature type="region of interest" description="Disordered" evidence="3">
    <location>
        <begin position="199"/>
        <end position="218"/>
    </location>
</feature>
<feature type="region of interest" description="Disordered" evidence="3">
    <location>
        <begin position="308"/>
        <end position="336"/>
    </location>
</feature>
<feature type="short sequence motif" description="Su(var)205-binding Pro-containing repeat 1" evidence="2">
    <location>
        <begin position="225"/>
        <end position="231"/>
    </location>
</feature>
<feature type="short sequence motif" description="Su(var)205-binding Pro-containing repeat 2" evidence="2">
    <location>
        <begin position="289"/>
        <end position="295"/>
    </location>
</feature>
<feature type="compositionally biased region" description="Polar residues" evidence="3">
    <location>
        <begin position="308"/>
        <end position="327"/>
    </location>
</feature>
<organism>
    <name type="scientific">Drosophila sechellia</name>
    <name type="common">Fruit fly</name>
    <dbReference type="NCBI Taxonomy" id="7238"/>
    <lineage>
        <taxon>Eukaryota</taxon>
        <taxon>Metazoa</taxon>
        <taxon>Ecdysozoa</taxon>
        <taxon>Arthropoda</taxon>
        <taxon>Hexapoda</taxon>
        <taxon>Insecta</taxon>
        <taxon>Pterygota</taxon>
        <taxon>Neoptera</taxon>
        <taxon>Endopterygota</taxon>
        <taxon>Diptera</taxon>
        <taxon>Brachycera</taxon>
        <taxon>Muscomorpha</taxon>
        <taxon>Ephydroidea</taxon>
        <taxon>Drosophilidae</taxon>
        <taxon>Drosophila</taxon>
        <taxon>Sophophora</taxon>
    </lineage>
</organism>
<reference evidence="4" key="1">
    <citation type="journal article" date="2007" name="Nature">
        <title>Evolution of genes and genomes on the Drosophila phylogeny.</title>
        <authorList>
            <consortium name="Drosophila 12 genomes consortium"/>
        </authorList>
    </citation>
    <scope>NUCLEOTIDE SEQUENCE [LARGE SCALE GENOMIC DNA]</scope>
    <source>
        <strain evidence="4">Rob3c / Tucson 14021-0248.25</strain>
    </source>
</reference>
<dbReference type="EMBL" id="CH480815">
    <property type="protein sequence ID" value="EDW43455.1"/>
    <property type="molecule type" value="Genomic_DNA"/>
</dbReference>
<dbReference type="STRING" id="7238.B4HGK2"/>
<dbReference type="EnsemblMetazoa" id="FBtr0209558">
    <property type="protein sequence ID" value="FBpp0208050"/>
    <property type="gene ID" value="FBgn0181426"/>
</dbReference>
<dbReference type="EnsemblMetazoa" id="XM_002032433.2">
    <property type="protein sequence ID" value="XP_002032469.1"/>
    <property type="gene ID" value="LOC6607705"/>
</dbReference>
<dbReference type="EnsemblMetazoa" id="XM_032721406.1">
    <property type="protein sequence ID" value="XP_032577297.1"/>
    <property type="gene ID" value="LOC6607705"/>
</dbReference>
<dbReference type="GeneID" id="6607705"/>
<dbReference type="KEGG" id="dse:6607705"/>
<dbReference type="HOGENOM" id="CLU_059636_0_0_1"/>
<dbReference type="OMA" id="QINSESM"/>
<dbReference type="PhylomeDB" id="B4HGK2"/>
<dbReference type="ChiTaRS" id="cav">
    <property type="organism name" value="fly"/>
</dbReference>
<dbReference type="Proteomes" id="UP000001292">
    <property type="component" value="Unassembled WGS sequence"/>
</dbReference>
<dbReference type="GO" id="GO:0000775">
    <property type="term" value="C:chromosome, centromeric region"/>
    <property type="evidence" value="ECO:0007669"/>
    <property type="project" value="EnsemblMetazoa"/>
</dbReference>
<dbReference type="GO" id="GO:0005634">
    <property type="term" value="C:nucleus"/>
    <property type="evidence" value="ECO:0007669"/>
    <property type="project" value="UniProtKB-SubCell"/>
</dbReference>
<dbReference type="GO" id="GO:0000782">
    <property type="term" value="C:telomere cap complex"/>
    <property type="evidence" value="ECO:0000250"/>
    <property type="project" value="UniProtKB"/>
</dbReference>
<dbReference type="GO" id="GO:0042162">
    <property type="term" value="F:telomeric DNA binding"/>
    <property type="evidence" value="ECO:0000250"/>
    <property type="project" value="UniProtKB"/>
</dbReference>
<dbReference type="GO" id="GO:0016233">
    <property type="term" value="P:telomere capping"/>
    <property type="evidence" value="ECO:0000250"/>
    <property type="project" value="UniProtKB"/>
</dbReference>
<evidence type="ECO:0000250" key="1">
    <source>
        <dbReference type="UniProtKB" id="Q95RV2"/>
    </source>
</evidence>
<evidence type="ECO:0000255" key="2"/>
<evidence type="ECO:0000256" key="3">
    <source>
        <dbReference type="SAM" id="MobiDB-lite"/>
    </source>
</evidence>
<evidence type="ECO:0000312" key="4">
    <source>
        <dbReference type="EMBL" id="EDW43455.1"/>
    </source>
</evidence>
<accession>B4HGK2</accession>
<comment type="function">
    <text evidence="1">Binds to chromosome ends in a sequence-dependent manner and is required for telomere capping.</text>
</comment>
<comment type="subunit">
    <text evidence="1">Interacts (via C-terminus) with Su(var)205 dimer (via hinge and chromoshadow domain) and with moi to form the terminin, telomere-capping, complex. Interacts with HP6, which is also part of the terminin complex (By similarity).</text>
</comment>
<comment type="subcellular location">
    <subcellularLocation>
        <location evidence="1">Nucleus</location>
    </subcellularLocation>
    <subcellularLocation>
        <location evidence="1">Chromosome</location>
        <location evidence="1">Telomere</location>
    </subcellularLocation>
</comment>
<comment type="miscellaneous">
    <text>Multiple telomeric associations (TAs) in the same metaphase spread often result in multicentric linear chromosomes that resemble little 'trains' of chromosomes, hence the name 'caravaggio', an Italian train.</text>
</comment>
<sequence>MSGTQMSAFLRQYLADEDKKIRAQFKESDPNNKLILWMHEKTRITEEDLARPYTEDEVKELCLRTKVKVDMTAWNCLWEAKKRFEAKGRFVNKSERFINRMYVKAVRKKMVQPYPEEFVAQRREVVAAETKKHNISRLDRWQRKKTQNLSAQESSPARGAHLSFIDAMQTHEDQVNANLSSVSQINFQVEAIARPAVSSSDLSGIGDDEDEHQQSEFQDEHINCPETAINENSVRCDPINSGRMRTGCINSQGNNNTESDPDYYMFGTQLSSLLRPTSTQEPDDQVNCPETEMNESWVRCDQINSESMSIGPSIDSEGTITFQNSESEPIDVDSIA</sequence>
<keyword id="KW-0158">Chromosome</keyword>
<keyword id="KW-0238">DNA-binding</keyword>
<keyword id="KW-0539">Nucleus</keyword>
<keyword id="KW-1185">Reference proteome</keyword>
<keyword id="KW-0677">Repeat</keyword>
<keyword id="KW-0779">Telomere</keyword>